<dbReference type="EMBL" id="M29322">
    <property type="protein sequence ID" value="AAA35381.1"/>
    <property type="molecule type" value="Genomic_DNA"/>
</dbReference>
<dbReference type="EMBL" id="JH682906">
    <property type="status" value="NOT_ANNOTATED_CDS"/>
    <property type="molecule type" value="Genomic_DNA"/>
</dbReference>
<dbReference type="PIR" id="A28792">
    <property type="entry name" value="A28792"/>
</dbReference>
<dbReference type="RefSeq" id="XP_003918648.1">
    <property type="nucleotide sequence ID" value="XM_003918599.2"/>
</dbReference>
<dbReference type="SMR" id="P05770"/>
<dbReference type="STRING" id="9555.ENSPANP00000042973"/>
<dbReference type="Ensembl" id="ENSPANT00000044903.2">
    <property type="protein sequence ID" value="ENSPANP00000042973.1"/>
    <property type="gene ID" value="ENSPANG00000031383.2"/>
</dbReference>
<dbReference type="eggNOG" id="ENOG502QVD6">
    <property type="taxonomic scope" value="Eukaryota"/>
</dbReference>
<dbReference type="GeneTree" id="ENSGT00950000182929"/>
<dbReference type="OMA" id="GHMTDAR"/>
<dbReference type="Proteomes" id="UP000028761">
    <property type="component" value="Chromosome 20"/>
</dbReference>
<dbReference type="Bgee" id="ENSPANG00000031383">
    <property type="expression patterns" value="Expressed in ventromedial nucleus of hypothalamus and 66 other cell types or tissues"/>
</dbReference>
<dbReference type="GO" id="GO:0034360">
    <property type="term" value="C:chylomicron remnant"/>
    <property type="evidence" value="ECO:0007669"/>
    <property type="project" value="Ensembl"/>
</dbReference>
<dbReference type="GO" id="GO:0005783">
    <property type="term" value="C:endoplasmic reticulum"/>
    <property type="evidence" value="ECO:0007669"/>
    <property type="project" value="Ensembl"/>
</dbReference>
<dbReference type="GO" id="GO:0070062">
    <property type="term" value="C:extracellular exosome"/>
    <property type="evidence" value="ECO:0000250"/>
    <property type="project" value="UniProtKB"/>
</dbReference>
<dbReference type="GO" id="GO:0031012">
    <property type="term" value="C:extracellular matrix"/>
    <property type="evidence" value="ECO:0000250"/>
    <property type="project" value="UniProtKB"/>
</dbReference>
<dbReference type="GO" id="GO:0005615">
    <property type="term" value="C:extracellular space"/>
    <property type="evidence" value="ECO:0000250"/>
    <property type="project" value="UniProtKB"/>
</dbReference>
<dbReference type="GO" id="GO:0098978">
    <property type="term" value="C:glutamatergic synapse"/>
    <property type="evidence" value="ECO:0007669"/>
    <property type="project" value="Ensembl"/>
</dbReference>
<dbReference type="GO" id="GO:0005794">
    <property type="term" value="C:Golgi apparatus"/>
    <property type="evidence" value="ECO:0007669"/>
    <property type="project" value="Ensembl"/>
</dbReference>
<dbReference type="GO" id="GO:0034364">
    <property type="term" value="C:high-density lipoprotein particle"/>
    <property type="evidence" value="ECO:0000250"/>
    <property type="project" value="UniProtKB"/>
</dbReference>
<dbReference type="GO" id="GO:0034363">
    <property type="term" value="C:intermediate-density lipoprotein particle"/>
    <property type="evidence" value="ECO:0000250"/>
    <property type="project" value="UniProtKB"/>
</dbReference>
<dbReference type="GO" id="GO:0034362">
    <property type="term" value="C:low-density lipoprotein particle"/>
    <property type="evidence" value="ECO:0000250"/>
    <property type="project" value="UniProtKB"/>
</dbReference>
<dbReference type="GO" id="GO:0042470">
    <property type="term" value="C:melanosome"/>
    <property type="evidence" value="ECO:0007669"/>
    <property type="project" value="Ensembl"/>
</dbReference>
<dbReference type="GO" id="GO:0097487">
    <property type="term" value="C:multivesicular body, internal vesicle"/>
    <property type="evidence" value="ECO:0000250"/>
    <property type="project" value="UniProtKB"/>
</dbReference>
<dbReference type="GO" id="GO:0005886">
    <property type="term" value="C:plasma membrane"/>
    <property type="evidence" value="ECO:0007669"/>
    <property type="project" value="GOC"/>
</dbReference>
<dbReference type="GO" id="GO:0043083">
    <property type="term" value="C:synaptic cleft"/>
    <property type="evidence" value="ECO:0007669"/>
    <property type="project" value="Ensembl"/>
</dbReference>
<dbReference type="GO" id="GO:0034361">
    <property type="term" value="C:very-low-density lipoprotein particle"/>
    <property type="evidence" value="ECO:0000250"/>
    <property type="project" value="UniProtKB"/>
</dbReference>
<dbReference type="GO" id="GO:0001540">
    <property type="term" value="F:amyloid-beta binding"/>
    <property type="evidence" value="ECO:0000250"/>
    <property type="project" value="UniProtKB"/>
</dbReference>
<dbReference type="GO" id="GO:0016209">
    <property type="term" value="F:antioxidant activity"/>
    <property type="evidence" value="ECO:0007669"/>
    <property type="project" value="Ensembl"/>
</dbReference>
<dbReference type="GO" id="GO:0120020">
    <property type="term" value="F:cholesterol transfer activity"/>
    <property type="evidence" value="ECO:0007669"/>
    <property type="project" value="Ensembl"/>
</dbReference>
<dbReference type="GO" id="GO:0019899">
    <property type="term" value="F:enzyme binding"/>
    <property type="evidence" value="ECO:0007669"/>
    <property type="project" value="Ensembl"/>
</dbReference>
<dbReference type="GO" id="GO:0043395">
    <property type="term" value="F:heparan sulfate proteoglycan binding"/>
    <property type="evidence" value="ECO:0000250"/>
    <property type="project" value="UniProtKB"/>
</dbReference>
<dbReference type="GO" id="GO:0008201">
    <property type="term" value="F:heparin binding"/>
    <property type="evidence" value="ECO:0000250"/>
    <property type="project" value="UniProtKB"/>
</dbReference>
<dbReference type="GO" id="GO:0042802">
    <property type="term" value="F:identical protein binding"/>
    <property type="evidence" value="ECO:0000250"/>
    <property type="project" value="UniProtKB"/>
</dbReference>
<dbReference type="GO" id="GO:0071813">
    <property type="term" value="F:lipoprotein particle binding"/>
    <property type="evidence" value="ECO:0007669"/>
    <property type="project" value="Ensembl"/>
</dbReference>
<dbReference type="GO" id="GO:0050750">
    <property type="term" value="F:low-density lipoprotein particle receptor binding"/>
    <property type="evidence" value="ECO:0000250"/>
    <property type="project" value="UniProtKB"/>
</dbReference>
<dbReference type="GO" id="GO:0046911">
    <property type="term" value="F:metal chelating activity"/>
    <property type="evidence" value="ECO:0007669"/>
    <property type="project" value="Ensembl"/>
</dbReference>
<dbReference type="GO" id="GO:0060228">
    <property type="term" value="F:phosphatidylcholine-sterol O-acyltransferase activator activity"/>
    <property type="evidence" value="ECO:0007669"/>
    <property type="project" value="Ensembl"/>
</dbReference>
<dbReference type="GO" id="GO:0005543">
    <property type="term" value="F:phospholipid binding"/>
    <property type="evidence" value="ECO:0007669"/>
    <property type="project" value="Ensembl"/>
</dbReference>
<dbReference type="GO" id="GO:0042803">
    <property type="term" value="F:protein homodimerization activity"/>
    <property type="evidence" value="ECO:0007669"/>
    <property type="project" value="Ensembl"/>
</dbReference>
<dbReference type="GO" id="GO:0048018">
    <property type="term" value="F:receptor ligand activity"/>
    <property type="evidence" value="ECO:0007669"/>
    <property type="project" value="Ensembl"/>
</dbReference>
<dbReference type="GO" id="GO:0048156">
    <property type="term" value="F:tau protein binding"/>
    <property type="evidence" value="ECO:0007669"/>
    <property type="project" value="Ensembl"/>
</dbReference>
<dbReference type="GO" id="GO:0070326">
    <property type="term" value="F:very-low-density lipoprotein particle receptor binding"/>
    <property type="evidence" value="ECO:0007669"/>
    <property type="project" value="Ensembl"/>
</dbReference>
<dbReference type="GO" id="GO:0097113">
    <property type="term" value="P:AMPA glutamate receptor clustering"/>
    <property type="evidence" value="ECO:0007669"/>
    <property type="project" value="Ensembl"/>
</dbReference>
<dbReference type="GO" id="GO:0042982">
    <property type="term" value="P:amyloid precursor protein metabolic process"/>
    <property type="evidence" value="ECO:0007669"/>
    <property type="project" value="Ensembl"/>
</dbReference>
<dbReference type="GO" id="GO:0048844">
    <property type="term" value="P:artery morphogenesis"/>
    <property type="evidence" value="ECO:0007669"/>
    <property type="project" value="Ensembl"/>
</dbReference>
<dbReference type="GO" id="GO:0071402">
    <property type="term" value="P:cellular response to lipoprotein particle stimulus"/>
    <property type="evidence" value="ECO:0007669"/>
    <property type="project" value="Ensembl"/>
</dbReference>
<dbReference type="GO" id="GO:0006707">
    <property type="term" value="P:cholesterol catabolic process"/>
    <property type="evidence" value="ECO:0007669"/>
    <property type="project" value="Ensembl"/>
</dbReference>
<dbReference type="GO" id="GO:0033344">
    <property type="term" value="P:cholesterol efflux"/>
    <property type="evidence" value="ECO:0000250"/>
    <property type="project" value="UniProtKB"/>
</dbReference>
<dbReference type="GO" id="GO:0042632">
    <property type="term" value="P:cholesterol homeostasis"/>
    <property type="evidence" value="ECO:0007669"/>
    <property type="project" value="Ensembl"/>
</dbReference>
<dbReference type="GO" id="GO:0034382">
    <property type="term" value="P:chylomicron remnant clearance"/>
    <property type="evidence" value="ECO:0000250"/>
    <property type="project" value="UniProtKB"/>
</dbReference>
<dbReference type="GO" id="GO:0055089">
    <property type="term" value="P:fatty acid homeostasis"/>
    <property type="evidence" value="ECO:0007669"/>
    <property type="project" value="Ensembl"/>
</dbReference>
<dbReference type="GO" id="GO:0007186">
    <property type="term" value="P:G protein-coupled receptor signaling pathway"/>
    <property type="evidence" value="ECO:0007669"/>
    <property type="project" value="Ensembl"/>
</dbReference>
<dbReference type="GO" id="GO:0010467">
    <property type="term" value="P:gene expression"/>
    <property type="evidence" value="ECO:0007669"/>
    <property type="project" value="Ensembl"/>
</dbReference>
<dbReference type="GO" id="GO:0034380">
    <property type="term" value="P:high-density lipoprotein particle assembly"/>
    <property type="evidence" value="ECO:0000250"/>
    <property type="project" value="UniProtKB"/>
</dbReference>
<dbReference type="GO" id="GO:0034384">
    <property type="term" value="P:high-density lipoprotein particle clearance"/>
    <property type="evidence" value="ECO:0007669"/>
    <property type="project" value="Ensembl"/>
</dbReference>
<dbReference type="GO" id="GO:0034375">
    <property type="term" value="P:high-density lipoprotein particle remodeling"/>
    <property type="evidence" value="ECO:0007669"/>
    <property type="project" value="Ensembl"/>
</dbReference>
<dbReference type="GO" id="GO:0071831">
    <property type="term" value="P:intermediate-density lipoprotein particle clearance"/>
    <property type="evidence" value="ECO:0000250"/>
    <property type="project" value="UniProtKB"/>
</dbReference>
<dbReference type="GO" id="GO:0006874">
    <property type="term" value="P:intracellular calcium ion homeostasis"/>
    <property type="evidence" value="ECO:0007669"/>
    <property type="project" value="Ensembl"/>
</dbReference>
<dbReference type="GO" id="GO:0010877">
    <property type="term" value="P:lipid transport involved in lipid storage"/>
    <property type="evidence" value="ECO:0007669"/>
    <property type="project" value="Ensembl"/>
</dbReference>
<dbReference type="GO" id="GO:0042158">
    <property type="term" value="P:lipoprotein biosynthetic process"/>
    <property type="evidence" value="ECO:0000250"/>
    <property type="project" value="UniProtKB"/>
</dbReference>
<dbReference type="GO" id="GO:0042159">
    <property type="term" value="P:lipoprotein catabolic process"/>
    <property type="evidence" value="ECO:0007669"/>
    <property type="project" value="Ensembl"/>
</dbReference>
<dbReference type="GO" id="GO:0035641">
    <property type="term" value="P:locomotory exploration behavior"/>
    <property type="evidence" value="ECO:0007669"/>
    <property type="project" value="Ensembl"/>
</dbReference>
<dbReference type="GO" id="GO:0015909">
    <property type="term" value="P:long-chain fatty acid transport"/>
    <property type="evidence" value="ECO:0007669"/>
    <property type="project" value="Ensembl"/>
</dbReference>
<dbReference type="GO" id="GO:0007616">
    <property type="term" value="P:long-term memory"/>
    <property type="evidence" value="ECO:0007669"/>
    <property type="project" value="Ensembl"/>
</dbReference>
<dbReference type="GO" id="GO:0034374">
    <property type="term" value="P:low-density lipoprotein particle remodeling"/>
    <property type="evidence" value="ECO:0007669"/>
    <property type="project" value="Ensembl"/>
</dbReference>
<dbReference type="GO" id="GO:0051651">
    <property type="term" value="P:maintenance of location in cell"/>
    <property type="evidence" value="ECO:0007669"/>
    <property type="project" value="Ensembl"/>
</dbReference>
<dbReference type="GO" id="GO:0032438">
    <property type="term" value="P:melanosome organization"/>
    <property type="evidence" value="ECO:0000250"/>
    <property type="project" value="UniProtKB"/>
</dbReference>
<dbReference type="GO" id="GO:1905907">
    <property type="term" value="P:negative regulation of amyloid fibril formation"/>
    <property type="evidence" value="ECO:0000250"/>
    <property type="project" value="UniProtKB"/>
</dbReference>
<dbReference type="GO" id="GO:1902430">
    <property type="term" value="P:negative regulation of amyloid-beta formation"/>
    <property type="evidence" value="ECO:0007669"/>
    <property type="project" value="Ensembl"/>
</dbReference>
<dbReference type="GO" id="GO:0043537">
    <property type="term" value="P:negative regulation of blood vessel endothelial cell migration"/>
    <property type="evidence" value="ECO:0007669"/>
    <property type="project" value="Ensembl"/>
</dbReference>
<dbReference type="GO" id="GO:0090090">
    <property type="term" value="P:negative regulation of canonical Wnt signaling pathway"/>
    <property type="evidence" value="ECO:0007669"/>
    <property type="project" value="Ensembl"/>
</dbReference>
<dbReference type="GO" id="GO:0045541">
    <property type="term" value="P:negative regulation of cholesterol biosynthetic process"/>
    <property type="evidence" value="ECO:0007669"/>
    <property type="project" value="Ensembl"/>
</dbReference>
<dbReference type="GO" id="GO:0001937">
    <property type="term" value="P:negative regulation of endothelial cell proliferation"/>
    <property type="evidence" value="ECO:0007669"/>
    <property type="project" value="Ensembl"/>
</dbReference>
<dbReference type="GO" id="GO:0010629">
    <property type="term" value="P:negative regulation of gene expression"/>
    <property type="evidence" value="ECO:0007669"/>
    <property type="project" value="Ensembl"/>
</dbReference>
<dbReference type="GO" id="GO:0050728">
    <property type="term" value="P:negative regulation of inflammatory response"/>
    <property type="evidence" value="ECO:0007669"/>
    <property type="project" value="Ensembl"/>
</dbReference>
<dbReference type="GO" id="GO:1900272">
    <property type="term" value="P:negative regulation of long-term synaptic potentiation"/>
    <property type="evidence" value="ECO:0007669"/>
    <property type="project" value="Ensembl"/>
</dbReference>
<dbReference type="GO" id="GO:0010977">
    <property type="term" value="P:negative regulation of neuron projection development"/>
    <property type="evidence" value="ECO:0007669"/>
    <property type="project" value="Ensembl"/>
</dbReference>
<dbReference type="GO" id="GO:0010544">
    <property type="term" value="P:negative regulation of platelet activation"/>
    <property type="evidence" value="ECO:0007669"/>
    <property type="project" value="Ensembl"/>
</dbReference>
<dbReference type="GO" id="GO:0050709">
    <property type="term" value="P:negative regulation of protein secretion"/>
    <property type="evidence" value="ECO:0007669"/>
    <property type="project" value="Ensembl"/>
</dbReference>
<dbReference type="GO" id="GO:0048662">
    <property type="term" value="P:negative regulation of smooth muscle cell proliferation"/>
    <property type="evidence" value="ECO:0007669"/>
    <property type="project" value="Ensembl"/>
</dbReference>
<dbReference type="GO" id="GO:0090209">
    <property type="term" value="P:negative regulation of triglyceride metabolic process"/>
    <property type="evidence" value="ECO:0007669"/>
    <property type="project" value="Ensembl"/>
</dbReference>
<dbReference type="GO" id="GO:0031175">
    <property type="term" value="P:neuron projection development"/>
    <property type="evidence" value="ECO:0000250"/>
    <property type="project" value="UniProtKB"/>
</dbReference>
<dbReference type="GO" id="GO:0038060">
    <property type="term" value="P:nitric oxide-cGMP-mediated signaling"/>
    <property type="evidence" value="ECO:0007669"/>
    <property type="project" value="Ensembl"/>
</dbReference>
<dbReference type="GO" id="GO:0097114">
    <property type="term" value="P:NMDA glutamate receptor clustering"/>
    <property type="evidence" value="ECO:0007669"/>
    <property type="project" value="Ensembl"/>
</dbReference>
<dbReference type="GO" id="GO:0033700">
    <property type="term" value="P:phospholipid efflux"/>
    <property type="evidence" value="ECO:0007669"/>
    <property type="project" value="Ensembl"/>
</dbReference>
<dbReference type="GO" id="GO:0044794">
    <property type="term" value="P:positive regulation by host of viral process"/>
    <property type="evidence" value="ECO:0007669"/>
    <property type="project" value="Ensembl"/>
</dbReference>
<dbReference type="GO" id="GO:1900223">
    <property type="term" value="P:positive regulation of amyloid-beta clearance"/>
    <property type="evidence" value="ECO:0000250"/>
    <property type="project" value="UniProtKB"/>
</dbReference>
<dbReference type="GO" id="GO:0010875">
    <property type="term" value="P:positive regulation of cholesterol efflux"/>
    <property type="evidence" value="ECO:0007669"/>
    <property type="project" value="Ensembl"/>
</dbReference>
<dbReference type="GO" id="GO:0090205">
    <property type="term" value="P:positive regulation of cholesterol metabolic process"/>
    <property type="evidence" value="ECO:0007669"/>
    <property type="project" value="Ensembl"/>
</dbReference>
<dbReference type="GO" id="GO:0060999">
    <property type="term" value="P:positive regulation of dendritic spine development"/>
    <property type="evidence" value="ECO:0007669"/>
    <property type="project" value="Ensembl"/>
</dbReference>
<dbReference type="GO" id="GO:1902952">
    <property type="term" value="P:positive regulation of dendritic spine maintenance"/>
    <property type="evidence" value="ECO:0007669"/>
    <property type="project" value="Ensembl"/>
</dbReference>
<dbReference type="GO" id="GO:0045893">
    <property type="term" value="P:positive regulation of DNA-templated transcription"/>
    <property type="evidence" value="ECO:0007669"/>
    <property type="project" value="Ensembl"/>
</dbReference>
<dbReference type="GO" id="GO:0045807">
    <property type="term" value="P:positive regulation of endocytosis"/>
    <property type="evidence" value="ECO:0007669"/>
    <property type="project" value="Ensembl"/>
</dbReference>
<dbReference type="GO" id="GO:0070374">
    <property type="term" value="P:positive regulation of ERK1 and ERK2 cascade"/>
    <property type="evidence" value="ECO:0007669"/>
    <property type="project" value="Ensembl"/>
</dbReference>
<dbReference type="GO" id="GO:0046889">
    <property type="term" value="P:positive regulation of lipid biosynthetic process"/>
    <property type="evidence" value="ECO:0007669"/>
    <property type="project" value="Ensembl"/>
</dbReference>
<dbReference type="GO" id="GO:1903002">
    <property type="term" value="P:positive regulation of lipid transport across blood-brain barrier"/>
    <property type="evidence" value="ECO:0007669"/>
    <property type="project" value="Ensembl"/>
</dbReference>
<dbReference type="GO" id="GO:0140077">
    <property type="term" value="P:positive regulation of lipoprotein transport"/>
    <property type="evidence" value="ECO:0007669"/>
    <property type="project" value="Ensembl"/>
</dbReference>
<dbReference type="GO" id="GO:0032805">
    <property type="term" value="P:positive regulation of low-density lipoprotein particle receptor catabolic process"/>
    <property type="evidence" value="ECO:0007669"/>
    <property type="project" value="Ensembl"/>
</dbReference>
<dbReference type="GO" id="GO:0051044">
    <property type="term" value="P:positive regulation of membrane protein ectodomain proteolysis"/>
    <property type="evidence" value="ECO:0007669"/>
    <property type="project" value="Ensembl"/>
</dbReference>
<dbReference type="GO" id="GO:0010976">
    <property type="term" value="P:positive regulation of neuron projection development"/>
    <property type="evidence" value="ECO:0007669"/>
    <property type="project" value="Ensembl"/>
</dbReference>
<dbReference type="GO" id="GO:0045429">
    <property type="term" value="P:positive regulation of nitric oxide biosynthetic process"/>
    <property type="evidence" value="ECO:0007669"/>
    <property type="project" value="Ensembl"/>
</dbReference>
<dbReference type="GO" id="GO:1902995">
    <property type="term" value="P:positive regulation of phospholipid efflux"/>
    <property type="evidence" value="ECO:0007669"/>
    <property type="project" value="Ensembl"/>
</dbReference>
<dbReference type="GO" id="GO:0017038">
    <property type="term" value="P:protein import"/>
    <property type="evidence" value="ECO:0007669"/>
    <property type="project" value="Ensembl"/>
</dbReference>
<dbReference type="GO" id="GO:0006898">
    <property type="term" value="P:receptor-mediated endocytosis"/>
    <property type="evidence" value="ECO:0007669"/>
    <property type="project" value="Ensembl"/>
</dbReference>
<dbReference type="GO" id="GO:0042981">
    <property type="term" value="P:regulation of apoptotic process"/>
    <property type="evidence" value="ECO:0007669"/>
    <property type="project" value="Ensembl"/>
</dbReference>
<dbReference type="GO" id="GO:2000822">
    <property type="term" value="P:regulation of behavioral fear response"/>
    <property type="evidence" value="ECO:0007669"/>
    <property type="project" value="Ensembl"/>
</dbReference>
<dbReference type="GO" id="GO:0032489">
    <property type="term" value="P:regulation of Cdc42 protein signal transduction"/>
    <property type="evidence" value="ECO:0007669"/>
    <property type="project" value="Ensembl"/>
</dbReference>
<dbReference type="GO" id="GO:1905890">
    <property type="term" value="P:regulation of cellular response to very-low-density lipoprotein particle stimulus"/>
    <property type="evidence" value="ECO:0007669"/>
    <property type="project" value="Ensembl"/>
</dbReference>
<dbReference type="GO" id="GO:0045088">
    <property type="term" value="P:regulation of innate immune response"/>
    <property type="evidence" value="ECO:0007669"/>
    <property type="project" value="Ensembl"/>
</dbReference>
<dbReference type="GO" id="GO:0061136">
    <property type="term" value="P:regulation of proteasomal protein catabolic process"/>
    <property type="evidence" value="ECO:0007669"/>
    <property type="project" value="Ensembl"/>
</dbReference>
<dbReference type="GO" id="GO:0043254">
    <property type="term" value="P:regulation of protein-containing complex assembly"/>
    <property type="evidence" value="ECO:0007669"/>
    <property type="project" value="Ensembl"/>
</dbReference>
<dbReference type="GO" id="GO:0061771">
    <property type="term" value="P:response to caloric restriction"/>
    <property type="evidence" value="ECO:0007669"/>
    <property type="project" value="Ensembl"/>
</dbReference>
<dbReference type="GO" id="GO:0002021">
    <property type="term" value="P:response to dietary excess"/>
    <property type="evidence" value="ECO:0007669"/>
    <property type="project" value="Ensembl"/>
</dbReference>
<dbReference type="GO" id="GO:0006979">
    <property type="term" value="P:response to oxidative stress"/>
    <property type="evidence" value="ECO:0007669"/>
    <property type="project" value="Ensembl"/>
</dbReference>
<dbReference type="GO" id="GO:0043691">
    <property type="term" value="P:reverse cholesterol transport"/>
    <property type="evidence" value="ECO:0007669"/>
    <property type="project" value="Ensembl"/>
</dbReference>
<dbReference type="GO" id="GO:0070328">
    <property type="term" value="P:triglyceride homeostasis"/>
    <property type="evidence" value="ECO:0007669"/>
    <property type="project" value="Ensembl"/>
</dbReference>
<dbReference type="GO" id="GO:0006641">
    <property type="term" value="P:triglyceride metabolic process"/>
    <property type="evidence" value="ECO:0007669"/>
    <property type="project" value="Ensembl"/>
</dbReference>
<dbReference type="GO" id="GO:0071830">
    <property type="term" value="P:triglyceride-rich lipoprotein particle clearance"/>
    <property type="evidence" value="ECO:0000250"/>
    <property type="project" value="UniProtKB"/>
</dbReference>
<dbReference type="GO" id="GO:0042311">
    <property type="term" value="P:vasodilation"/>
    <property type="evidence" value="ECO:0007669"/>
    <property type="project" value="Ensembl"/>
</dbReference>
<dbReference type="GO" id="GO:0034447">
    <property type="term" value="P:very-low-density lipoprotein particle clearance"/>
    <property type="evidence" value="ECO:0000250"/>
    <property type="project" value="UniProtKB"/>
</dbReference>
<dbReference type="GO" id="GO:0034372">
    <property type="term" value="P:very-low-density lipoprotein particle remodeling"/>
    <property type="evidence" value="ECO:0007669"/>
    <property type="project" value="Ensembl"/>
</dbReference>
<dbReference type="GO" id="GO:0019068">
    <property type="term" value="P:virion assembly"/>
    <property type="evidence" value="ECO:0007669"/>
    <property type="project" value="Ensembl"/>
</dbReference>
<dbReference type="FunFam" id="1.20.120.20:FF:000002">
    <property type="entry name" value="Apolipoprotein E"/>
    <property type="match status" value="1"/>
</dbReference>
<dbReference type="FunFam" id="1.20.120.20:FF:000003">
    <property type="entry name" value="Apolipoprotein E"/>
    <property type="match status" value="1"/>
</dbReference>
<dbReference type="Gene3D" id="1.20.120.20">
    <property type="entry name" value="Apolipoprotein"/>
    <property type="match status" value="2"/>
</dbReference>
<dbReference type="InterPro" id="IPR000074">
    <property type="entry name" value="ApoA_E"/>
</dbReference>
<dbReference type="InterPro" id="IPR050163">
    <property type="entry name" value="Apolipoprotein_A1/A4/E"/>
</dbReference>
<dbReference type="PANTHER" id="PTHR18976">
    <property type="entry name" value="APOLIPOPROTEIN"/>
    <property type="match status" value="1"/>
</dbReference>
<dbReference type="PANTHER" id="PTHR18976:SF2">
    <property type="entry name" value="APOLIPOPROTEIN E"/>
    <property type="match status" value="1"/>
</dbReference>
<dbReference type="Pfam" id="PF01442">
    <property type="entry name" value="Apolipoprotein"/>
    <property type="match status" value="1"/>
</dbReference>
<dbReference type="SUPFAM" id="SSF58113">
    <property type="entry name" value="Apolipoprotein A-I"/>
    <property type="match status" value="1"/>
</dbReference>
<keyword id="KW-0162">Chylomicron</keyword>
<keyword id="KW-0967">Endosome</keyword>
<keyword id="KW-0272">Extracellular matrix</keyword>
<keyword id="KW-0325">Glycoprotein</keyword>
<keyword id="KW-0345">HDL</keyword>
<keyword id="KW-0358">Heparin-binding</keyword>
<keyword id="KW-0445">Lipid transport</keyword>
<keyword id="KW-0446">Lipid-binding</keyword>
<keyword id="KW-0558">Oxidation</keyword>
<keyword id="KW-0597">Phosphoprotein</keyword>
<keyword id="KW-1185">Reference proteome</keyword>
<keyword id="KW-0677">Repeat</keyword>
<keyword id="KW-0964">Secreted</keyword>
<keyword id="KW-0732">Signal</keyword>
<keyword id="KW-0813">Transport</keyword>
<keyword id="KW-0850">VLDL</keyword>
<proteinExistence type="inferred from homology"/>
<gene>
    <name type="primary">APOE</name>
</gene>
<sequence>MKVLWAALLVTFLAGCQAKVEQPVEPETEPELRQQAEWQSGQPWELALGRFWDYLRWVQTLSEQVQEELLSPQVTQELTTLMDETMKELKAYKSELEEQLSPVAEETRARLSKELQAAQARLGADMEDVRSRLVQYRSEVQAMLGQSTEELRARLASHLRKLRKRLLRDADDLQKRLAVYQAGAREGAERGVSAIRERLGPLVEQGRVRAATVGSLASQPLQERAQALGERLRARMEEMGSRTRDRLDEVKEQVAEVRAKLEEQAQQISLQAEAFQARLKSWFEPLVEDMQRQWAGLVEKVQAAVGASTAPVPSDNH</sequence>
<reference key="1">
    <citation type="journal article" date="1988" name="Genomics">
        <title>The baboon apolipoprotein E gene: structure, expression, and linkage with the gene for apolipoprotein C-1.</title>
        <authorList>
            <person name="Hixson J.E."/>
            <person name="Cox L.A."/>
            <person name="Borenstein S."/>
        </authorList>
    </citation>
    <scope>NUCLEOTIDE SEQUENCE [GENOMIC DNA]</scope>
</reference>
<reference key="2">
    <citation type="submission" date="2012-03" db="EMBL/GenBank/DDBJ databases">
        <title>Whole genome assembly of Papio anubis.</title>
        <authorList>
            <person name="Liu Y.L."/>
            <person name="Abraham K.A."/>
            <person name="Akbar H.A."/>
            <person name="Ali S.A."/>
            <person name="Anosike U.A."/>
            <person name="Aqrawi P.A."/>
            <person name="Arias F.A."/>
            <person name="Attaway T.A."/>
            <person name="Awwad R.A."/>
            <person name="Babu C.B."/>
            <person name="Bandaranaike D.B."/>
            <person name="Battles P.B."/>
            <person name="Bell A.B."/>
            <person name="Beltran B.B."/>
            <person name="Berhane-Mersha D.B."/>
            <person name="Bess C.B."/>
            <person name="Bickham C.B."/>
            <person name="Bolden T.B."/>
            <person name="Carter K.C."/>
            <person name="Chau D.C."/>
            <person name="Chavez A.C."/>
            <person name="Clerc-Blankenburg K.C."/>
            <person name="Coyle M.C."/>
            <person name="Dao M.D."/>
            <person name="Davila M.L.D."/>
            <person name="Davy-Carroll L.D."/>
            <person name="Denson S.D."/>
            <person name="Dinh H.D."/>
            <person name="Fernandez S.F."/>
            <person name="Fernando P.F."/>
            <person name="Forbes L.F."/>
            <person name="Francis C.F."/>
            <person name="Francisco L.F."/>
            <person name="Fu Q.F."/>
            <person name="Garcia-Iii R.G."/>
            <person name="Garrett T.G."/>
            <person name="Gross S.G."/>
            <person name="Gubbala S.G."/>
            <person name="Hirani K.H."/>
            <person name="Hogues M.H."/>
            <person name="Hollins B.H."/>
            <person name="Jackson L.J."/>
            <person name="Javaid M.J."/>
            <person name="Jhangiani S.J."/>
            <person name="Johnson A.J."/>
            <person name="Johnson B.J."/>
            <person name="Jones J.J."/>
            <person name="Joshi V.J."/>
            <person name="Kalu J.K."/>
            <person name="Khan N.K."/>
            <person name="Korchina V.K."/>
            <person name="Kovar C.K."/>
            <person name="Lago L.L."/>
            <person name="Lara F.L."/>
            <person name="Le T.-K.L."/>
            <person name="Lee S.L."/>
            <person name="Legall-Iii F.L."/>
            <person name="Lemon S.L."/>
            <person name="Liu J.L."/>
            <person name="Liu Y.-S.L."/>
            <person name="Liyanage D.L."/>
            <person name="Lopez J.L."/>
            <person name="Lorensuhewa L.L."/>
            <person name="Mata R.M."/>
            <person name="Mathew T.M."/>
            <person name="Mercado C.M."/>
            <person name="Mercado I.M."/>
            <person name="Morales K.M."/>
            <person name="Morgan M.M."/>
            <person name="Munidasa M.M."/>
            <person name="Ngo D.N."/>
            <person name="Nguyen L.N."/>
            <person name="Nguyen T.N."/>
            <person name="Nguyen N.N."/>
            <person name="Obregon M.O."/>
            <person name="Okwuonu G.O."/>
            <person name="Ongeri F.O."/>
            <person name="Onwere C.O."/>
            <person name="Osifeso I.O."/>
            <person name="Parra A.P."/>
            <person name="Patil S.P."/>
            <person name="Perez A.P."/>
            <person name="Perez Y.P."/>
            <person name="Pham C.P."/>
            <person name="Pu L.-L.P."/>
            <person name="Puazo M.P."/>
            <person name="Quiroz J.Q."/>
            <person name="Rouhana J.R."/>
            <person name="Ruiz M.R."/>
            <person name="Ruiz S.-J.R."/>
            <person name="Saada N.S."/>
            <person name="Santibanez J.S."/>
            <person name="Scheel M.S."/>
            <person name="Schneider B.S."/>
            <person name="Simmons D.S."/>
            <person name="Sisson I.S."/>
            <person name="Tang L.-Y.T."/>
            <person name="Thornton R.T."/>
            <person name="Tisius J.T."/>
            <person name="Toledanes G.T."/>
            <person name="Trejos Z.T."/>
            <person name="Usmani K.U."/>
            <person name="Varghese R.V."/>
            <person name="Vattathil S.V."/>
            <person name="Vee V.V."/>
            <person name="Walker D.W."/>
            <person name="Weissenberger G.W."/>
            <person name="White C.W."/>
            <person name="Williams A.W."/>
            <person name="Woodworth J.W."/>
            <person name="Wright R.W."/>
            <person name="Zhu Y.Z."/>
            <person name="Han Y.H."/>
            <person name="Newsham I.N."/>
            <person name="Nazareth L.N."/>
            <person name="Worley K.W."/>
            <person name="Muzny D.M."/>
            <person name="Rogers J.R."/>
            <person name="Gibbs R.G."/>
        </authorList>
    </citation>
    <scope>NUCLEOTIDE SEQUENCE [LARGE SCALE GENOMIC DNA]</scope>
</reference>
<organism>
    <name type="scientific">Papio anubis</name>
    <name type="common">Olive baboon</name>
    <dbReference type="NCBI Taxonomy" id="9555"/>
    <lineage>
        <taxon>Eukaryota</taxon>
        <taxon>Metazoa</taxon>
        <taxon>Chordata</taxon>
        <taxon>Craniata</taxon>
        <taxon>Vertebrata</taxon>
        <taxon>Euteleostomi</taxon>
        <taxon>Mammalia</taxon>
        <taxon>Eutheria</taxon>
        <taxon>Euarchontoglires</taxon>
        <taxon>Primates</taxon>
        <taxon>Haplorrhini</taxon>
        <taxon>Catarrhini</taxon>
        <taxon>Cercopithecidae</taxon>
        <taxon>Cercopithecinae</taxon>
        <taxon>Papio</taxon>
    </lineage>
</organism>
<name>APOE_PAPAN</name>
<accession>P05770</accession>
<accession>A0A096P2H8</accession>
<evidence type="ECO:0000250" key="1">
    <source>
        <dbReference type="UniProtKB" id="P02649"/>
    </source>
</evidence>
<evidence type="ECO:0000250" key="2">
    <source>
        <dbReference type="UniProtKB" id="P08226"/>
    </source>
</evidence>
<evidence type="ECO:0000255" key="3"/>
<evidence type="ECO:0000305" key="4"/>
<feature type="signal peptide" evidence="3">
    <location>
        <begin position="1"/>
        <end position="18"/>
    </location>
</feature>
<feature type="chain" id="PRO_0000001992" description="Apolipoprotein E">
    <location>
        <begin position="19"/>
        <end position="317"/>
    </location>
</feature>
<feature type="repeat" description="1">
    <location>
        <begin position="80"/>
        <end position="101"/>
    </location>
</feature>
<feature type="repeat" description="2">
    <location>
        <begin position="102"/>
        <end position="123"/>
    </location>
</feature>
<feature type="repeat" description="3">
    <location>
        <begin position="124"/>
        <end position="145"/>
    </location>
</feature>
<feature type="repeat" description="4">
    <location>
        <begin position="146"/>
        <end position="167"/>
    </location>
</feature>
<feature type="repeat" description="5">
    <location>
        <begin position="168"/>
        <end position="189"/>
    </location>
</feature>
<feature type="repeat" description="6">
    <location>
        <begin position="190"/>
        <end position="211"/>
    </location>
</feature>
<feature type="repeat" description="7">
    <location>
        <begin position="212"/>
        <end position="233"/>
    </location>
</feature>
<feature type="repeat" description="8">
    <location>
        <begin position="234"/>
        <end position="255"/>
    </location>
</feature>
<feature type="region of interest" description="8 X 22 AA approximate tandem repeats">
    <location>
        <begin position="80"/>
        <end position="255"/>
    </location>
</feature>
<feature type="region of interest" description="LDL and other lipoprotein receptors binding" evidence="1">
    <location>
        <begin position="158"/>
        <end position="168"/>
    </location>
</feature>
<feature type="region of interest" description="Lipid-binding and lipoprotein association" evidence="1">
    <location>
        <begin position="210"/>
        <end position="290"/>
    </location>
</feature>
<feature type="region of interest" description="Homooligomerization" evidence="1">
    <location>
        <begin position="266"/>
        <end position="317"/>
    </location>
</feature>
<feature type="region of interest" description="Specificity for association with VLDL" evidence="1">
    <location>
        <begin position="278"/>
        <end position="290"/>
    </location>
</feature>
<feature type="binding site" evidence="1">
    <location>
        <begin position="162"/>
        <end position="165"/>
    </location>
    <ligand>
        <name>heparin</name>
        <dbReference type="ChEBI" id="CHEBI:28304"/>
    </ligand>
</feature>
<feature type="binding site" evidence="1">
    <location>
        <begin position="229"/>
        <end position="236"/>
    </location>
    <ligand>
        <name>heparin</name>
        <dbReference type="ChEBI" id="CHEBI:28304"/>
    </ligand>
</feature>
<feature type="modified residue" description="Methionine sulfoxide" evidence="2">
    <location>
        <position position="143"/>
    </location>
</feature>
<feature type="modified residue" description="Phosphoserine" evidence="1">
    <location>
        <position position="147"/>
    </location>
</feature>
<feature type="sequence conflict" description="In Ref. 1; AAA35381." evidence="4" ref="1">
    <original>EL</original>
    <variation>DV</variation>
    <location>
        <begin position="31"/>
        <end position="32"/>
    </location>
</feature>
<comment type="function">
    <text evidence="1">APOE is an apolipoprotein, a protein associating with lipid particles, that mainly functions in lipoprotein-mediated lipid transport between organs via the plasma and interstitial fluids. APOE is a core component of plasma lipoproteins and is involved in their production, conversion and clearance. Apolipoproteins are amphipathic molecules that interact both with lipids of the lipoprotein particle core and the aqueous environment of the plasma. As such, APOE associates with chylomicrons, chylomicron remnants, very low density lipoproteins (VLDL) and intermediate density lipoproteins (IDL) but shows a preferential binding to high-density lipoproteins (HDL). It also binds a wide range of cellular receptors including the LDL receptor/LDLR, the LDL receptor-related proteins LRP1, LRP2 and LRP8 and the very low-density lipoprotein receptor/VLDLR that mediate the cellular uptake of the APOE-containing lipoprotein particles. Finally, APOE also has a heparin-binding activity and binds heparan-sulfate proteoglycans on the surface of cells, a property that supports the capture and the receptor-mediated uptake of APOE-containing lipoproteins by cells. A main function of APOE is to mediate lipoprotein clearance through the uptake of chylomicrons, VLDLs, and HDLs by hepatocytes. APOE is also involved in the biosynthesis by the liver of VLDLs as well as their uptake by peripheral tissues ensuring the delivery of triglycerides and energy storage in muscle, heart and adipose tissues. By participating in the lipoprotein-mediated distribution of lipids among tissues, APOE plays a critical role in plasma and tissues lipid homeostasis. APOE is also involved in two steps of reverse cholesterol transport, the HDLs-mediated transport of cholesterol from peripheral tissues to the liver, and thereby plays an important role in cholesterol homeostasis. First, it is functionally associated with ABCA1 in the biogenesis of HDLs in tissues. Second, it is enriched in circulating HDLs and mediates their uptake by hepatocytes. APOE also plays an important role in lipid transport in the central nervous system, regulating neuron survival and sprouting.</text>
</comment>
<comment type="subunit">
    <text evidence="1">Homotetramer. May interact with ABCA1; functionally associated with ABCA1 in the biogenesis of HDLs. May interact with APP/A4 amyloid-beta peptide; the interaction is extremely stable in vitro but its physiological significance is unclear. May interact with MAPT. May interact with MAP2. In the cerebrospinal fluid, interacts with secreted SORL1. Interacts with PMEL; this allows the loading of PMEL luminal fragment on ILVs to induce fibril nucleation.</text>
</comment>
<comment type="subcellular location">
    <subcellularLocation>
        <location evidence="1">Secreted</location>
    </subcellularLocation>
    <subcellularLocation>
        <location evidence="1">Secreted</location>
        <location evidence="1">Extracellular space</location>
    </subcellularLocation>
    <subcellularLocation>
        <location evidence="1">Secreted</location>
        <location evidence="1">Extracellular space</location>
        <location evidence="1">Extracellular matrix</location>
    </subcellularLocation>
    <subcellularLocation>
        <location evidence="1">Extracellular vesicle</location>
    </subcellularLocation>
    <subcellularLocation>
        <location evidence="1">Endosome</location>
        <location evidence="1">Multivesicular body</location>
    </subcellularLocation>
    <text evidence="1">In the plasma, APOE is associated with chylomicrons, chylomicrons remnants, VLDL, LDL and HDL lipoproteins. Lipid poor oligomeric APOE is associated with the extracellular matrix in a calcium- and heparan-sulfate proteoglycans-dependent manner. Lipidation induces the release from the extracellular matrix. Colocalizes with CD63 and PMEL at exosomes and in intraluminal vesicles within multivesicular endosomes.</text>
</comment>
<comment type="PTM">
    <text evidence="1">APOE exists as multiple glycosylated and sialylated glycoforms within cells and in plasma. The extent of glycosylation and sialylation are tissue and context specific.</text>
</comment>
<comment type="PTM">
    <text evidence="1">Glycated in plasma VLDL.</text>
</comment>
<comment type="PTM">
    <text evidence="1">Phosphorylated by FAM20C in the extracellular medium.</text>
</comment>
<comment type="similarity">
    <text evidence="4">Belongs to the apolipoprotein A1/A4/E family.</text>
</comment>
<protein>
    <recommendedName>
        <fullName>Apolipoprotein E</fullName>
        <shortName>Apo-E</shortName>
    </recommendedName>
</protein>